<gene>
    <name type="primary">Tmem17</name>
</gene>
<dbReference type="EMBL" id="AL731818">
    <property type="status" value="NOT_ANNOTATED_CDS"/>
    <property type="molecule type" value="Genomic_DNA"/>
</dbReference>
<dbReference type="EMBL" id="BC030386">
    <property type="protein sequence ID" value="AAH30386.1"/>
    <property type="molecule type" value="mRNA"/>
</dbReference>
<dbReference type="CCDS" id="CCDS24470.1"/>
<dbReference type="RefSeq" id="NP_705824.1">
    <property type="nucleotide sequence ID" value="NM_153596.3"/>
</dbReference>
<dbReference type="CORUM" id="Q8K0U3"/>
<dbReference type="FunCoup" id="Q8K0U3">
    <property type="interactions" value="70"/>
</dbReference>
<dbReference type="IntAct" id="Q8K0U3">
    <property type="interactions" value="4"/>
</dbReference>
<dbReference type="STRING" id="10090.ENSMUSP00000051414"/>
<dbReference type="GlyCosmos" id="Q8K0U3">
    <property type="glycosylation" value="1 site, No reported glycans"/>
</dbReference>
<dbReference type="GlyGen" id="Q8K0U3">
    <property type="glycosylation" value="1 site, 1 N-linked glycan (1 site)"/>
</dbReference>
<dbReference type="PhosphoSitePlus" id="Q8K0U3"/>
<dbReference type="PaxDb" id="10090-ENSMUSP00000051414"/>
<dbReference type="PeptideAtlas" id="Q8K0U3"/>
<dbReference type="ProteomicsDB" id="259256"/>
<dbReference type="Pumba" id="Q8K0U3"/>
<dbReference type="Antibodypedia" id="15953">
    <property type="antibodies" value="57 antibodies from 12 providers"/>
</dbReference>
<dbReference type="DNASU" id="103765"/>
<dbReference type="Ensembl" id="ENSMUST00000059319.8">
    <property type="protein sequence ID" value="ENSMUSP00000051414.8"/>
    <property type="gene ID" value="ENSMUSG00000049904.8"/>
</dbReference>
<dbReference type="GeneID" id="103765"/>
<dbReference type="KEGG" id="mmu:103765"/>
<dbReference type="UCSC" id="uc007iee.1">
    <property type="organism name" value="mouse"/>
</dbReference>
<dbReference type="AGR" id="MGI:2144205"/>
<dbReference type="CTD" id="200728"/>
<dbReference type="MGI" id="MGI:2144205">
    <property type="gene designation" value="Tmem17"/>
</dbReference>
<dbReference type="VEuPathDB" id="HostDB:ENSMUSG00000049904"/>
<dbReference type="eggNOG" id="KOG4694">
    <property type="taxonomic scope" value="Eukaryota"/>
</dbReference>
<dbReference type="GeneTree" id="ENSGT00940000153899"/>
<dbReference type="HOGENOM" id="CLU_092836_0_0_1"/>
<dbReference type="InParanoid" id="Q8K0U3"/>
<dbReference type="OMA" id="LWWVSCI"/>
<dbReference type="OrthoDB" id="311720at2759"/>
<dbReference type="PhylomeDB" id="Q8K0U3"/>
<dbReference type="TreeFam" id="TF323824"/>
<dbReference type="BioGRID-ORCS" id="103765">
    <property type="hits" value="6 hits in 77 CRISPR screens"/>
</dbReference>
<dbReference type="ChiTaRS" id="Tmem17">
    <property type="organism name" value="mouse"/>
</dbReference>
<dbReference type="PRO" id="PR:Q8K0U3"/>
<dbReference type="Proteomes" id="UP000000589">
    <property type="component" value="Chromosome 11"/>
</dbReference>
<dbReference type="RNAct" id="Q8K0U3">
    <property type="molecule type" value="protein"/>
</dbReference>
<dbReference type="Bgee" id="ENSMUSG00000049904">
    <property type="expression patterns" value="Expressed in neural tube and 161 other cell types or tissues"/>
</dbReference>
<dbReference type="GO" id="GO:0060170">
    <property type="term" value="C:ciliary membrane"/>
    <property type="evidence" value="ECO:0000314"/>
    <property type="project" value="UniProtKB"/>
</dbReference>
<dbReference type="GO" id="GO:0035869">
    <property type="term" value="C:ciliary transition zone"/>
    <property type="evidence" value="ECO:0000314"/>
    <property type="project" value="UniProtKB"/>
</dbReference>
<dbReference type="GO" id="GO:0016020">
    <property type="term" value="C:membrane"/>
    <property type="evidence" value="ECO:0000314"/>
    <property type="project" value="MGI"/>
</dbReference>
<dbReference type="GO" id="GO:0036038">
    <property type="term" value="C:MKS complex"/>
    <property type="evidence" value="ECO:0000314"/>
    <property type="project" value="UniProtKB"/>
</dbReference>
<dbReference type="GO" id="GO:0060271">
    <property type="term" value="P:cilium assembly"/>
    <property type="evidence" value="ECO:0000315"/>
    <property type="project" value="UniProtKB"/>
</dbReference>
<dbReference type="GO" id="GO:1905515">
    <property type="term" value="P:non-motile cilium assembly"/>
    <property type="evidence" value="ECO:0007669"/>
    <property type="project" value="Ensembl"/>
</dbReference>
<dbReference type="GO" id="GO:0007224">
    <property type="term" value="P:smoothened signaling pathway"/>
    <property type="evidence" value="ECO:0000315"/>
    <property type="project" value="UniProtKB"/>
</dbReference>
<dbReference type="InterPro" id="IPR019184">
    <property type="entry name" value="Uncharacterised_TM-17"/>
</dbReference>
<dbReference type="PANTHER" id="PTHR13531">
    <property type="entry name" value="GEO07735P1-RELATED-RELATED"/>
    <property type="match status" value="1"/>
</dbReference>
<dbReference type="PANTHER" id="PTHR13531:SF14">
    <property type="entry name" value="TRANSMEMBRANE PROTEIN 17"/>
    <property type="match status" value="1"/>
</dbReference>
<dbReference type="Pfam" id="PF09799">
    <property type="entry name" value="Transmemb_17"/>
    <property type="match status" value="1"/>
</dbReference>
<name>TMM17_MOUSE</name>
<comment type="function">
    <text evidence="2">Transmembrane component of the tectonic-like complex, a complex localized at the transition zone of primary cilia and acting as a barrier that prevents diffusion of transmembrane proteins between the cilia and plasma membranes. Required for ciliogenesis and sonic hedgehog/SHH signaling.</text>
</comment>
<comment type="subunit">
    <text evidence="2">Part of the tectonic-like complex (also named B9 complex).</text>
</comment>
<comment type="subcellular location">
    <subcellularLocation>
        <location evidence="2">Cell projection</location>
        <location evidence="2">Cilium membrane</location>
        <topology evidence="2">Multi-pass membrane protein</topology>
    </subcellularLocation>
    <text>Localizes to the transition zone of primary cilia.</text>
</comment>
<comment type="similarity">
    <text evidence="3">Belongs to the TMEM17 family.</text>
</comment>
<accession>Q8K0U3</accession>
<keyword id="KW-1003">Cell membrane</keyword>
<keyword id="KW-0966">Cell projection</keyword>
<keyword id="KW-0969">Cilium</keyword>
<keyword id="KW-0970">Cilium biogenesis/degradation</keyword>
<keyword id="KW-0325">Glycoprotein</keyword>
<keyword id="KW-0472">Membrane</keyword>
<keyword id="KW-1185">Reference proteome</keyword>
<keyword id="KW-0812">Transmembrane</keyword>
<keyword id="KW-1133">Transmembrane helix</keyword>
<sequence length="198" mass="22623">MELPDPVRQRLSNLSLTVFGDSSRTGPESSDAADNEMVSSLALQMSLYFNSYFFPLWWVSCIVMLHLKYSILPDYYKFIVVTVVILITLIEAIRLYLGCMGNLQEKVPELAGFWLLSLLLQLPLILFLLLNDGLRNLPLEKAIHIIFTIFLTFQVISAFLTLKKMVNQLAARFHLQDFDQLSSSSAAVRRVRQCTEEL</sequence>
<organism>
    <name type="scientific">Mus musculus</name>
    <name type="common">Mouse</name>
    <dbReference type="NCBI Taxonomy" id="10090"/>
    <lineage>
        <taxon>Eukaryota</taxon>
        <taxon>Metazoa</taxon>
        <taxon>Chordata</taxon>
        <taxon>Craniata</taxon>
        <taxon>Vertebrata</taxon>
        <taxon>Euteleostomi</taxon>
        <taxon>Mammalia</taxon>
        <taxon>Eutheria</taxon>
        <taxon>Euarchontoglires</taxon>
        <taxon>Glires</taxon>
        <taxon>Rodentia</taxon>
        <taxon>Myomorpha</taxon>
        <taxon>Muroidea</taxon>
        <taxon>Muridae</taxon>
        <taxon>Murinae</taxon>
        <taxon>Mus</taxon>
        <taxon>Mus</taxon>
    </lineage>
</organism>
<protein>
    <recommendedName>
        <fullName>Transmembrane protein 17</fullName>
    </recommendedName>
</protein>
<proteinExistence type="evidence at protein level"/>
<evidence type="ECO:0000255" key="1"/>
<evidence type="ECO:0000269" key="2">
    <source>
    </source>
</evidence>
<evidence type="ECO:0000305" key="3"/>
<reference key="1">
    <citation type="journal article" date="2009" name="PLoS Biol.">
        <title>Lineage-specific biology revealed by a finished genome assembly of the mouse.</title>
        <authorList>
            <person name="Church D.M."/>
            <person name="Goodstadt L."/>
            <person name="Hillier L.W."/>
            <person name="Zody M.C."/>
            <person name="Goldstein S."/>
            <person name="She X."/>
            <person name="Bult C.J."/>
            <person name="Agarwala R."/>
            <person name="Cherry J.L."/>
            <person name="DiCuccio M."/>
            <person name="Hlavina W."/>
            <person name="Kapustin Y."/>
            <person name="Meric P."/>
            <person name="Maglott D."/>
            <person name="Birtle Z."/>
            <person name="Marques A.C."/>
            <person name="Graves T."/>
            <person name="Zhou S."/>
            <person name="Teague B."/>
            <person name="Potamousis K."/>
            <person name="Churas C."/>
            <person name="Place M."/>
            <person name="Herschleb J."/>
            <person name="Runnheim R."/>
            <person name="Forrest D."/>
            <person name="Amos-Landgraf J."/>
            <person name="Schwartz D.C."/>
            <person name="Cheng Z."/>
            <person name="Lindblad-Toh K."/>
            <person name="Eichler E.E."/>
            <person name="Ponting C.P."/>
        </authorList>
    </citation>
    <scope>NUCLEOTIDE SEQUENCE [LARGE SCALE GENOMIC DNA]</scope>
    <source>
        <strain>C57BL/6J</strain>
    </source>
</reference>
<reference key="2">
    <citation type="journal article" date="2004" name="Genome Res.">
        <title>The status, quality, and expansion of the NIH full-length cDNA project: the Mammalian Gene Collection (MGC).</title>
        <authorList>
            <consortium name="The MGC Project Team"/>
        </authorList>
    </citation>
    <scope>NUCLEOTIDE SEQUENCE [LARGE SCALE MRNA]</scope>
    <source>
        <tissue>Retina</tissue>
    </source>
</reference>
<reference key="3">
    <citation type="journal article" date="2012" name="Nat. Cell Biol.">
        <title>A ciliopathy complex at the transition zone protects the cilia as a privileged membrane domain.</title>
        <authorList>
            <person name="Chih B."/>
            <person name="Liu P."/>
            <person name="Chinn Y."/>
            <person name="Chalouni C."/>
            <person name="Komuves L.G."/>
            <person name="Hass P.E."/>
            <person name="Sandoval W."/>
            <person name="Peterson A.S."/>
        </authorList>
    </citation>
    <scope>IDENTIFICATION IN THE TECTONIC-LIKE COMPLEX</scope>
    <scope>FUNCTION</scope>
    <scope>SUBCELLULAR LOCATION</scope>
</reference>
<feature type="chain" id="PRO_0000255261" description="Transmembrane protein 17">
    <location>
        <begin position="1"/>
        <end position="198"/>
    </location>
</feature>
<feature type="transmembrane region" description="Helical" evidence="1">
    <location>
        <begin position="47"/>
        <end position="67"/>
    </location>
</feature>
<feature type="transmembrane region" description="Helical" evidence="1">
    <location>
        <begin position="78"/>
        <end position="98"/>
    </location>
</feature>
<feature type="transmembrane region" description="Helical" evidence="1">
    <location>
        <begin position="110"/>
        <end position="130"/>
    </location>
</feature>
<feature type="transmembrane region" description="Helical" evidence="1">
    <location>
        <begin position="142"/>
        <end position="162"/>
    </location>
</feature>
<feature type="glycosylation site" description="N-linked (GlcNAc...) asparagine" evidence="1">
    <location>
        <position position="13"/>
    </location>
</feature>